<gene>
    <name type="primary">Orc2</name>
    <name type="ORF">CG3041</name>
</gene>
<protein>
    <recommendedName>
        <fullName>Origin recognition complex subunit 2</fullName>
        <shortName>DmORC2</shortName>
    </recommendedName>
</protein>
<keyword id="KW-0002">3D-structure</keyword>
<keyword id="KW-0137">Centromere</keyword>
<keyword id="KW-0158">Chromosome</keyword>
<keyword id="KW-0235">DNA replication</keyword>
<keyword id="KW-0539">Nucleus</keyword>
<keyword id="KW-0597">Phosphoprotein</keyword>
<keyword id="KW-1185">Reference proteome</keyword>
<sequence length="618" mass="68996">MSASNKGGYKTPRKENLMSIENLTNSEEESEDLNTAMVGNAVESQPKVTSRRSTRRPSPTKKYQAYQKESNGKGQEERIVVNYVEMSDERSSDAEDQEEEESIEESENAARPAAKDLHLIQSEYNVAGTSMFGFNTPKKRDAMALAALNATPCTPKTPKTPRLGVKTPDTKRKKSMDQPKTPAHVRTRVKKQIAKIVADSDEDFSGDESDFRPSDEESSSSSSSSDAGNSSDNDAADDEPKTPSRARRAIVVPVLPKTPSAARLRQSARAKKSNEFVPESDGYFHSHASSKILTSDHTLDRLKNPRLAADRVFSLLSEIKTSAEHEGSINAIMEEYRSYFPKWMCILNEGFNILLYGLGSKHQLLQSFHREVLHKQTVLVVNGFFPSLTIKDMLDSITSDILDAGISPANPHEAVDMIEEEFALIPETHLFLIVHNLDGAMLRNVKAQAILSRLARIPNIHLLASIDHINTPLLWDQGKLCSFNFSWWDCTTMLPYTNETAFENSLLVQNSGELALSSMRSVFSSLTTNSRGIYMLIVKYQLKNKGNATYQGMPFRDLYSSCREAFLVSSDLALRAQLTEFLDHKLVKSKRSVDGSEQLTIPIDGALLQQFLEEQEKK</sequence>
<feature type="chain" id="PRO_0000127079" description="Origin recognition complex subunit 2">
    <location>
        <begin position="1"/>
        <end position="618"/>
    </location>
</feature>
<feature type="region of interest" description="Disordered" evidence="1">
    <location>
        <begin position="1"/>
        <end position="116"/>
    </location>
</feature>
<feature type="region of interest" description="Disordered" evidence="1">
    <location>
        <begin position="149"/>
        <end position="274"/>
    </location>
</feature>
<feature type="compositionally biased region" description="Basic residues" evidence="1">
    <location>
        <begin position="49"/>
        <end position="59"/>
    </location>
</feature>
<feature type="compositionally biased region" description="Basic and acidic residues" evidence="1">
    <location>
        <begin position="70"/>
        <end position="79"/>
    </location>
</feature>
<feature type="compositionally biased region" description="Acidic residues" evidence="1">
    <location>
        <begin position="94"/>
        <end position="107"/>
    </location>
</feature>
<feature type="compositionally biased region" description="Low complexity" evidence="1">
    <location>
        <begin position="151"/>
        <end position="161"/>
    </location>
</feature>
<feature type="compositionally biased region" description="Basic residues" evidence="1">
    <location>
        <begin position="183"/>
        <end position="193"/>
    </location>
</feature>
<feature type="compositionally biased region" description="Acidic residues" evidence="1">
    <location>
        <begin position="199"/>
        <end position="208"/>
    </location>
</feature>
<feature type="compositionally biased region" description="Low complexity" evidence="1">
    <location>
        <begin position="219"/>
        <end position="233"/>
    </location>
</feature>
<feature type="modified residue" description="Phosphothreonine" evidence="5">
    <location>
        <position position="24"/>
    </location>
</feature>
<feature type="modified residue" description="Phosphoserine" evidence="5">
    <location>
        <position position="26"/>
    </location>
</feature>
<feature type="modified residue" description="Phosphoserine" evidence="5">
    <location>
        <position position="30"/>
    </location>
</feature>
<feature type="modified residue" description="Phosphoserine" evidence="5">
    <location>
        <position position="87"/>
    </location>
</feature>
<feature type="modified residue" description="Phosphoserine" evidence="5">
    <location>
        <position position="91"/>
    </location>
</feature>
<feature type="modified residue" description="Phosphoserine" evidence="5">
    <location>
        <position position="92"/>
    </location>
</feature>
<feature type="modified residue" description="Phosphothreonine" evidence="5">
    <location>
        <position position="151"/>
    </location>
</feature>
<feature type="modified residue" description="Phosphothreonine" evidence="5">
    <location>
        <position position="154"/>
    </location>
</feature>
<feature type="modified residue" description="Phosphothreonine" evidence="5">
    <location>
        <position position="157"/>
    </location>
</feature>
<feature type="modified residue" description="Phosphothreonine" evidence="5">
    <location>
        <position position="160"/>
    </location>
</feature>
<feature type="modified residue" description="Phosphothreonine" evidence="5">
    <location>
        <position position="167"/>
    </location>
</feature>
<feature type="modified residue" description="Phosphothreonine" evidence="5">
    <location>
        <position position="170"/>
    </location>
</feature>
<feature type="modified residue" description="Phosphothreonine" evidence="5">
    <location>
        <position position="181"/>
    </location>
</feature>
<feature type="modified residue" description="Phosphothreonine" evidence="5">
    <location>
        <position position="258"/>
    </location>
</feature>
<feature type="modified residue" description="Phosphoserine" evidence="5">
    <location>
        <position position="260"/>
    </location>
</feature>
<feature type="sequence conflict" description="In Ref. 1; AAC46955." evidence="8" ref="1">
    <original>A</original>
    <variation>T</variation>
    <location>
        <position position="113"/>
    </location>
</feature>
<feature type="sequence conflict" description="In Ref. 1; AAC46955." evidence="8" ref="1">
    <original>A</original>
    <variation>G</variation>
    <location>
        <position position="246"/>
    </location>
</feature>
<feature type="sequence conflict" description="In Ref. 1; AAC46955." evidence="8" ref="1">
    <original>N</original>
    <variation>I</variation>
    <location>
        <position position="274"/>
    </location>
</feature>
<feature type="helix" evidence="10">
    <location>
        <begin position="281"/>
        <end position="284"/>
    </location>
</feature>
<feature type="helix" evidence="10">
    <location>
        <begin position="324"/>
        <end position="337"/>
    </location>
</feature>
<feature type="helix" evidence="10">
    <location>
        <begin position="340"/>
        <end position="348"/>
    </location>
</feature>
<feature type="strand" evidence="10">
    <location>
        <begin position="352"/>
        <end position="355"/>
    </location>
</feature>
<feature type="helix" evidence="10">
    <location>
        <begin position="362"/>
        <end position="371"/>
    </location>
</feature>
<feature type="strand" evidence="10">
    <location>
        <begin position="374"/>
        <end position="382"/>
    </location>
</feature>
<feature type="helix" evidence="10">
    <location>
        <begin position="390"/>
        <end position="400"/>
    </location>
</feature>
<feature type="helix" evidence="10">
    <location>
        <begin position="411"/>
        <end position="422"/>
    </location>
</feature>
<feature type="strand" evidence="10">
    <location>
        <begin position="430"/>
        <end position="435"/>
    </location>
</feature>
<feature type="strand" evidence="11">
    <location>
        <begin position="440"/>
        <end position="442"/>
    </location>
</feature>
<feature type="helix" evidence="10">
    <location>
        <begin position="445"/>
        <end position="455"/>
    </location>
</feature>
<feature type="strand" evidence="10">
    <location>
        <begin position="457"/>
        <end position="465"/>
    </location>
</feature>
<feature type="helix" evidence="10">
    <location>
        <begin position="471"/>
        <end position="473"/>
    </location>
</feature>
<feature type="helix" evidence="10">
    <location>
        <begin position="477"/>
        <end position="482"/>
    </location>
</feature>
<feature type="strand" evidence="10">
    <location>
        <begin position="485"/>
        <end position="488"/>
    </location>
</feature>
<feature type="turn" evidence="10">
    <location>
        <begin position="497"/>
        <end position="500"/>
    </location>
</feature>
<feature type="helix" evidence="10">
    <location>
        <begin position="516"/>
        <end position="523"/>
    </location>
</feature>
<feature type="helix" evidence="10">
    <location>
        <begin position="528"/>
        <end position="543"/>
    </location>
</feature>
<feature type="helix" evidence="10">
    <location>
        <begin position="555"/>
        <end position="564"/>
    </location>
</feature>
<feature type="helix" evidence="10">
    <location>
        <begin position="571"/>
        <end position="583"/>
    </location>
</feature>
<feature type="strand" evidence="10">
    <location>
        <begin position="588"/>
        <end position="590"/>
    </location>
</feature>
<feature type="strand" evidence="10">
    <location>
        <begin position="598"/>
        <end position="600"/>
    </location>
</feature>
<feature type="helix" evidence="10">
    <location>
        <begin position="605"/>
        <end position="614"/>
    </location>
</feature>
<accession>Q24168</accession>
<accession>Q9VFP4</accession>
<dbReference type="EMBL" id="U43504">
    <property type="protein sequence ID" value="AAC46955.1"/>
    <property type="molecule type" value="mRNA"/>
</dbReference>
<dbReference type="EMBL" id="AF246305">
    <property type="protein sequence ID" value="AAF99606.1"/>
    <property type="molecule type" value="Genomic_DNA"/>
</dbReference>
<dbReference type="EMBL" id="AE014297">
    <property type="protein sequence ID" value="AAF55006.1"/>
    <property type="molecule type" value="Genomic_DNA"/>
</dbReference>
<dbReference type="EMBL" id="AY051471">
    <property type="protein sequence ID" value="AAK92895.1"/>
    <property type="molecule type" value="mRNA"/>
</dbReference>
<dbReference type="RefSeq" id="NP_731873.1">
    <property type="nucleotide sequence ID" value="NM_169563.2"/>
</dbReference>
<dbReference type="PDB" id="4XGC">
    <property type="method" value="X-ray"/>
    <property type="resolution" value="3.50 A"/>
    <property type="chains" value="B=266-618"/>
</dbReference>
<dbReference type="PDB" id="7JGR">
    <property type="method" value="EM"/>
    <property type="resolution" value="3.90 A"/>
    <property type="chains" value="B=1-618"/>
</dbReference>
<dbReference type="PDB" id="7JGS">
    <property type="method" value="EM"/>
    <property type="resolution" value="3.20 A"/>
    <property type="chains" value="B=1-618"/>
</dbReference>
<dbReference type="PDB" id="7JK2">
    <property type="method" value="EM"/>
    <property type="resolution" value="3.20 A"/>
    <property type="chains" value="B=1-618"/>
</dbReference>
<dbReference type="PDB" id="7JK3">
    <property type="method" value="EM"/>
    <property type="resolution" value="3.40 A"/>
    <property type="chains" value="B=1-618"/>
</dbReference>
<dbReference type="PDB" id="7JK4">
    <property type="method" value="EM"/>
    <property type="resolution" value="3.40 A"/>
    <property type="chains" value="B=1-618"/>
</dbReference>
<dbReference type="PDB" id="7JK5">
    <property type="method" value="EM"/>
    <property type="resolution" value="3.90 A"/>
    <property type="chains" value="B=1-618"/>
</dbReference>
<dbReference type="PDB" id="7JK6">
    <property type="method" value="EM"/>
    <property type="resolution" value="4.00 A"/>
    <property type="chains" value="B=1-618"/>
</dbReference>
<dbReference type="PDBsum" id="4XGC"/>
<dbReference type="PDBsum" id="7JGR"/>
<dbReference type="PDBsum" id="7JGS"/>
<dbReference type="PDBsum" id="7JK2"/>
<dbReference type="PDBsum" id="7JK3"/>
<dbReference type="PDBsum" id="7JK4"/>
<dbReference type="PDBsum" id="7JK5"/>
<dbReference type="PDBsum" id="7JK6"/>
<dbReference type="EMDB" id="EMD-22329"/>
<dbReference type="EMDB" id="EMD-22330"/>
<dbReference type="EMDB" id="EMD-22359"/>
<dbReference type="EMDB" id="EMD-22360"/>
<dbReference type="EMDB" id="EMD-22361"/>
<dbReference type="EMDB" id="EMD-22362"/>
<dbReference type="EMDB" id="EMD-22363"/>
<dbReference type="SMR" id="Q24168"/>
<dbReference type="BioGRID" id="66780">
    <property type="interactions" value="22"/>
</dbReference>
<dbReference type="ComplexPortal" id="CPX-2369">
    <property type="entry name" value="Nuclear origin recognition complex"/>
</dbReference>
<dbReference type="DIP" id="DIP-23209N"/>
<dbReference type="FunCoup" id="Q24168">
    <property type="interactions" value="1981"/>
</dbReference>
<dbReference type="IntAct" id="Q24168">
    <property type="interactions" value="6"/>
</dbReference>
<dbReference type="MINT" id="Q24168"/>
<dbReference type="STRING" id="7227.FBpp0082329"/>
<dbReference type="iPTMnet" id="Q24168"/>
<dbReference type="PaxDb" id="7227-FBpp0082329"/>
<dbReference type="DNASU" id="41703"/>
<dbReference type="EnsemblMetazoa" id="FBtr0082866">
    <property type="protein sequence ID" value="FBpp0082329"/>
    <property type="gene ID" value="FBgn0015270"/>
</dbReference>
<dbReference type="GeneID" id="41703"/>
<dbReference type="KEGG" id="dme:Dmel_CG3041"/>
<dbReference type="AGR" id="FB:FBgn0015270"/>
<dbReference type="CTD" id="4999"/>
<dbReference type="FlyBase" id="FBgn0015270">
    <property type="gene designation" value="Orc2"/>
</dbReference>
<dbReference type="VEuPathDB" id="VectorBase:FBgn0015270"/>
<dbReference type="eggNOG" id="KOG2928">
    <property type="taxonomic scope" value="Eukaryota"/>
</dbReference>
<dbReference type="GeneTree" id="ENSGT00390000015228"/>
<dbReference type="HOGENOM" id="CLU_018596_3_0_1"/>
<dbReference type="InParanoid" id="Q24168"/>
<dbReference type="OMA" id="AHERYFF"/>
<dbReference type="OrthoDB" id="20198at2759"/>
<dbReference type="PhylomeDB" id="Q24168"/>
<dbReference type="Reactome" id="R-DME-176187">
    <property type="pathway name" value="Activation of ATR in response to replication stress"/>
</dbReference>
<dbReference type="Reactome" id="R-DME-68616">
    <property type="pathway name" value="Assembly of the ORC complex at the origin of replication"/>
</dbReference>
<dbReference type="Reactome" id="R-DME-68689">
    <property type="pathway name" value="CDC6 association with the ORC:origin complex"/>
</dbReference>
<dbReference type="Reactome" id="R-DME-68949">
    <property type="pathway name" value="Orc1 removal from chromatin"/>
</dbReference>
<dbReference type="Reactome" id="R-DME-68962">
    <property type="pathway name" value="Activation of the pre-replicative complex"/>
</dbReference>
<dbReference type="SignaLink" id="Q24168"/>
<dbReference type="BioGRID-ORCS" id="41703">
    <property type="hits" value="0 hits in 1 CRISPR screen"/>
</dbReference>
<dbReference type="CD-CODE" id="19512460">
    <property type="entry name" value="Synthetic Condensate 000336"/>
</dbReference>
<dbReference type="CD-CODE" id="477BAC9B">
    <property type="entry name" value="Synthetic Condensate 000340"/>
</dbReference>
<dbReference type="EvolutionaryTrace" id="Q24168"/>
<dbReference type="GenomeRNAi" id="41703"/>
<dbReference type="PRO" id="PR:Q24168"/>
<dbReference type="Proteomes" id="UP000000803">
    <property type="component" value="Chromosome 3R"/>
</dbReference>
<dbReference type="Bgee" id="FBgn0015270">
    <property type="expression patterns" value="Expressed in secondary oocyte and 33 other cell types or tissues"/>
</dbReference>
<dbReference type="GO" id="GO:0005723">
    <property type="term" value="C:alpha-heterochromatin"/>
    <property type="evidence" value="ECO:0000314"/>
    <property type="project" value="FlyBase"/>
</dbReference>
<dbReference type="GO" id="GO:0000792">
    <property type="term" value="C:heterochromatin"/>
    <property type="evidence" value="ECO:0000314"/>
    <property type="project" value="FlyBase"/>
</dbReference>
<dbReference type="GO" id="GO:0005664">
    <property type="term" value="C:nuclear origin of replication recognition complex"/>
    <property type="evidence" value="ECO:0000314"/>
    <property type="project" value="FlyBase"/>
</dbReference>
<dbReference type="GO" id="GO:0005634">
    <property type="term" value="C:nucleus"/>
    <property type="evidence" value="ECO:0000314"/>
    <property type="project" value="UniProtKB"/>
</dbReference>
<dbReference type="GO" id="GO:0003682">
    <property type="term" value="F:chromatin binding"/>
    <property type="evidence" value="ECO:0000314"/>
    <property type="project" value="FlyBase"/>
</dbReference>
<dbReference type="GO" id="GO:0003688">
    <property type="term" value="F:DNA replication origin binding"/>
    <property type="evidence" value="ECO:0000318"/>
    <property type="project" value="GO_Central"/>
</dbReference>
<dbReference type="GO" id="GO:0030261">
    <property type="term" value="P:chromosome condensation"/>
    <property type="evidence" value="ECO:0000315"/>
    <property type="project" value="FlyBase"/>
</dbReference>
<dbReference type="GO" id="GO:0006260">
    <property type="term" value="P:DNA replication"/>
    <property type="evidence" value="ECO:0000315"/>
    <property type="project" value="FlyBase"/>
</dbReference>
<dbReference type="GO" id="GO:0006270">
    <property type="term" value="P:DNA replication initiation"/>
    <property type="evidence" value="ECO:0000314"/>
    <property type="project" value="FlyBase"/>
</dbReference>
<dbReference type="GO" id="GO:0006261">
    <property type="term" value="P:DNA-templated DNA replication"/>
    <property type="evidence" value="ECO:0000250"/>
    <property type="project" value="FlyBase"/>
</dbReference>
<dbReference type="GO" id="GO:0007307">
    <property type="term" value="P:eggshell chorion gene amplification"/>
    <property type="evidence" value="ECO:0000315"/>
    <property type="project" value="FlyBase"/>
</dbReference>
<dbReference type="GO" id="GO:0007076">
    <property type="term" value="P:mitotic chromosome condensation"/>
    <property type="evidence" value="ECO:0000315"/>
    <property type="project" value="FlyBase"/>
</dbReference>
<dbReference type="GO" id="GO:0007052">
    <property type="term" value="P:mitotic spindle organization"/>
    <property type="evidence" value="ECO:0000315"/>
    <property type="project" value="FlyBase"/>
</dbReference>
<dbReference type="InterPro" id="IPR007220">
    <property type="entry name" value="ORC2"/>
</dbReference>
<dbReference type="InterPro" id="IPR056772">
    <property type="entry name" value="RecA-like_ORC2"/>
</dbReference>
<dbReference type="InterPro" id="IPR056773">
    <property type="entry name" value="WHD_ORC2"/>
</dbReference>
<dbReference type="PANTHER" id="PTHR14052">
    <property type="entry name" value="ORIGIN RECOGNITION COMPLEX SUBUNIT 2"/>
    <property type="match status" value="1"/>
</dbReference>
<dbReference type="PANTHER" id="PTHR14052:SF0">
    <property type="entry name" value="ORIGIN RECOGNITION COMPLEX SUBUNIT 2"/>
    <property type="match status" value="1"/>
</dbReference>
<dbReference type="Pfam" id="PF04084">
    <property type="entry name" value="RecA-like_ORC2"/>
    <property type="match status" value="1"/>
</dbReference>
<dbReference type="Pfam" id="PF24882">
    <property type="entry name" value="WHD_ORC2"/>
    <property type="match status" value="1"/>
</dbReference>
<comment type="function">
    <text evidence="2 9">Component of the origin recognition complex (ORC) that binds origins of replication (PubMed:11137005). DNA-binding is ATP-dependent, however specific DNA sequences that define origins of replication have not been identified so far (PubMed:11137005). ORC is required to assemble the pre-replication complex necessary to initiate DNA replication (PubMed:11137005). As part of the ORC complex, might also have a role in mRNA export (Probable).</text>
</comment>
<comment type="subunit">
    <text evidence="4 6 7">ORC is composed of six subunits. Interacts with Mcm10 (PubMed:12808023). Interacts with CG9890 (PubMed:30713769). Interaction between the TREX-2/AMEX complex and the ORC complex is required for ORC localization to mRNPs, and consequently mRNA export (PubMed:27016737).</text>
</comment>
<comment type="interaction">
    <interactant intactId="EBI-179453">
        <id>Q24168</id>
    </interactant>
    <interactant intactId="EBI-91264">
        <id>Q9VIE6</id>
        <label>Mcm10</label>
    </interactant>
    <organismsDiffer>false</organismsDiffer>
    <experiments>2</experiments>
</comment>
<comment type="subcellular location">
    <subcellularLocation>
        <location evidence="2 3">Nucleus</location>
    </subcellularLocation>
    <subcellularLocation>
        <location evidence="2 3">Chromosome</location>
    </subcellularLocation>
    <subcellularLocation>
        <location evidence="2">Chromosome</location>
        <location evidence="2">Centromere</location>
    </subcellularLocation>
    <text>Centromeres of metaphase and anaphase chromosomes of early syncytial embryos. Later in development, found in pericentric regions of late anaphase and telophase chromosomes.</text>
</comment>
<comment type="developmental stage">
    <text evidence="6">Detected in embryos (at protein level).</text>
</comment>
<comment type="disruption phenotype">
    <text evidence="2">Cause death late in larval development, with defects in cell-cycle progression and chromosome condensation in mitosis.</text>
</comment>
<comment type="similarity">
    <text evidence="8">Belongs to the ORC2 family.</text>
</comment>
<organism>
    <name type="scientific">Drosophila melanogaster</name>
    <name type="common">Fruit fly</name>
    <dbReference type="NCBI Taxonomy" id="7227"/>
    <lineage>
        <taxon>Eukaryota</taxon>
        <taxon>Metazoa</taxon>
        <taxon>Ecdysozoa</taxon>
        <taxon>Arthropoda</taxon>
        <taxon>Hexapoda</taxon>
        <taxon>Insecta</taxon>
        <taxon>Pterygota</taxon>
        <taxon>Neoptera</taxon>
        <taxon>Endopterygota</taxon>
        <taxon>Diptera</taxon>
        <taxon>Brachycera</taxon>
        <taxon>Muscomorpha</taxon>
        <taxon>Ephydroidea</taxon>
        <taxon>Drosophilidae</taxon>
        <taxon>Drosophila</taxon>
        <taxon>Sophophora</taxon>
    </lineage>
</organism>
<reference key="1">
    <citation type="journal article" date="1995" name="Science">
        <title>A Drosophila homolog of the yeast origin recognition complex.</title>
        <authorList>
            <person name="Gossen M."/>
            <person name="Pak D.T.S."/>
            <person name="Hansen S.K."/>
            <person name="Acharya J.K."/>
            <person name="Botchan M.R."/>
        </authorList>
    </citation>
    <scope>NUCLEOTIDE SEQUENCE [MRNA]</scope>
</reference>
<reference key="2">
    <citation type="journal article" date="2000" name="Curr. Biol.">
        <title>Aberrant replication timing induces defective chromosome condensation in Drosophila ORC2 mutants.</title>
        <authorList>
            <person name="Loupart M.-L."/>
            <person name="Krause S.A."/>
            <person name="Heck M.M.S."/>
        </authorList>
    </citation>
    <scope>NUCLEOTIDE SEQUENCE [GENOMIC DNA]</scope>
    <scope>FUNCTION</scope>
    <scope>SUBCELLULAR LOCATION</scope>
    <scope>DISRUPTION PHENOTYPE</scope>
</reference>
<reference key="3">
    <citation type="journal article" date="2000" name="Science">
        <title>The genome sequence of Drosophila melanogaster.</title>
        <authorList>
            <person name="Adams M.D."/>
            <person name="Celniker S.E."/>
            <person name="Holt R.A."/>
            <person name="Evans C.A."/>
            <person name="Gocayne J.D."/>
            <person name="Amanatides P.G."/>
            <person name="Scherer S.E."/>
            <person name="Li P.W."/>
            <person name="Hoskins R.A."/>
            <person name="Galle R.F."/>
            <person name="George R.A."/>
            <person name="Lewis S.E."/>
            <person name="Richards S."/>
            <person name="Ashburner M."/>
            <person name="Henderson S.N."/>
            <person name="Sutton G.G."/>
            <person name="Wortman J.R."/>
            <person name="Yandell M.D."/>
            <person name="Zhang Q."/>
            <person name="Chen L.X."/>
            <person name="Brandon R.C."/>
            <person name="Rogers Y.-H.C."/>
            <person name="Blazej R.G."/>
            <person name="Champe M."/>
            <person name="Pfeiffer B.D."/>
            <person name="Wan K.H."/>
            <person name="Doyle C."/>
            <person name="Baxter E.G."/>
            <person name="Helt G."/>
            <person name="Nelson C.R."/>
            <person name="Miklos G.L.G."/>
            <person name="Abril J.F."/>
            <person name="Agbayani A."/>
            <person name="An H.-J."/>
            <person name="Andrews-Pfannkoch C."/>
            <person name="Baldwin D."/>
            <person name="Ballew R.M."/>
            <person name="Basu A."/>
            <person name="Baxendale J."/>
            <person name="Bayraktaroglu L."/>
            <person name="Beasley E.M."/>
            <person name="Beeson K.Y."/>
            <person name="Benos P.V."/>
            <person name="Berman B.P."/>
            <person name="Bhandari D."/>
            <person name="Bolshakov S."/>
            <person name="Borkova D."/>
            <person name="Botchan M.R."/>
            <person name="Bouck J."/>
            <person name="Brokstein P."/>
            <person name="Brottier P."/>
            <person name="Burtis K.C."/>
            <person name="Busam D.A."/>
            <person name="Butler H."/>
            <person name="Cadieu E."/>
            <person name="Center A."/>
            <person name="Chandra I."/>
            <person name="Cherry J.M."/>
            <person name="Cawley S."/>
            <person name="Dahlke C."/>
            <person name="Davenport L.B."/>
            <person name="Davies P."/>
            <person name="de Pablos B."/>
            <person name="Delcher A."/>
            <person name="Deng Z."/>
            <person name="Mays A.D."/>
            <person name="Dew I."/>
            <person name="Dietz S.M."/>
            <person name="Dodson K."/>
            <person name="Doup L.E."/>
            <person name="Downes M."/>
            <person name="Dugan-Rocha S."/>
            <person name="Dunkov B.C."/>
            <person name="Dunn P."/>
            <person name="Durbin K.J."/>
            <person name="Evangelista C.C."/>
            <person name="Ferraz C."/>
            <person name="Ferriera S."/>
            <person name="Fleischmann W."/>
            <person name="Fosler C."/>
            <person name="Gabrielian A.E."/>
            <person name="Garg N.S."/>
            <person name="Gelbart W.M."/>
            <person name="Glasser K."/>
            <person name="Glodek A."/>
            <person name="Gong F."/>
            <person name="Gorrell J.H."/>
            <person name="Gu Z."/>
            <person name="Guan P."/>
            <person name="Harris M."/>
            <person name="Harris N.L."/>
            <person name="Harvey D.A."/>
            <person name="Heiman T.J."/>
            <person name="Hernandez J.R."/>
            <person name="Houck J."/>
            <person name="Hostin D."/>
            <person name="Houston K.A."/>
            <person name="Howland T.J."/>
            <person name="Wei M.-H."/>
            <person name="Ibegwam C."/>
            <person name="Jalali M."/>
            <person name="Kalush F."/>
            <person name="Karpen G.H."/>
            <person name="Ke Z."/>
            <person name="Kennison J.A."/>
            <person name="Ketchum K.A."/>
            <person name="Kimmel B.E."/>
            <person name="Kodira C.D."/>
            <person name="Kraft C.L."/>
            <person name="Kravitz S."/>
            <person name="Kulp D."/>
            <person name="Lai Z."/>
            <person name="Lasko P."/>
            <person name="Lei Y."/>
            <person name="Levitsky A.A."/>
            <person name="Li J.H."/>
            <person name="Li Z."/>
            <person name="Liang Y."/>
            <person name="Lin X."/>
            <person name="Liu X."/>
            <person name="Mattei B."/>
            <person name="McIntosh T.C."/>
            <person name="McLeod M.P."/>
            <person name="McPherson D."/>
            <person name="Merkulov G."/>
            <person name="Milshina N.V."/>
            <person name="Mobarry C."/>
            <person name="Morris J."/>
            <person name="Moshrefi A."/>
            <person name="Mount S.M."/>
            <person name="Moy M."/>
            <person name="Murphy B."/>
            <person name="Murphy L."/>
            <person name="Muzny D.M."/>
            <person name="Nelson D.L."/>
            <person name="Nelson D.R."/>
            <person name="Nelson K.A."/>
            <person name="Nixon K."/>
            <person name="Nusskern D.R."/>
            <person name="Pacleb J.M."/>
            <person name="Palazzolo M."/>
            <person name="Pittman G.S."/>
            <person name="Pan S."/>
            <person name="Pollard J."/>
            <person name="Puri V."/>
            <person name="Reese M.G."/>
            <person name="Reinert K."/>
            <person name="Remington K."/>
            <person name="Saunders R.D.C."/>
            <person name="Scheeler F."/>
            <person name="Shen H."/>
            <person name="Shue B.C."/>
            <person name="Siden-Kiamos I."/>
            <person name="Simpson M."/>
            <person name="Skupski M.P."/>
            <person name="Smith T.J."/>
            <person name="Spier E."/>
            <person name="Spradling A.C."/>
            <person name="Stapleton M."/>
            <person name="Strong R."/>
            <person name="Sun E."/>
            <person name="Svirskas R."/>
            <person name="Tector C."/>
            <person name="Turner R."/>
            <person name="Venter E."/>
            <person name="Wang A.H."/>
            <person name="Wang X."/>
            <person name="Wang Z.-Y."/>
            <person name="Wassarman D.A."/>
            <person name="Weinstock G.M."/>
            <person name="Weissenbach J."/>
            <person name="Williams S.M."/>
            <person name="Woodage T."/>
            <person name="Worley K.C."/>
            <person name="Wu D."/>
            <person name="Yang S."/>
            <person name="Yao Q.A."/>
            <person name="Ye J."/>
            <person name="Yeh R.-F."/>
            <person name="Zaveri J.S."/>
            <person name="Zhan M."/>
            <person name="Zhang G."/>
            <person name="Zhao Q."/>
            <person name="Zheng L."/>
            <person name="Zheng X.H."/>
            <person name="Zhong F.N."/>
            <person name="Zhong W."/>
            <person name="Zhou X."/>
            <person name="Zhu S.C."/>
            <person name="Zhu X."/>
            <person name="Smith H.O."/>
            <person name="Gibbs R.A."/>
            <person name="Myers E.W."/>
            <person name="Rubin G.M."/>
            <person name="Venter J.C."/>
        </authorList>
    </citation>
    <scope>NUCLEOTIDE SEQUENCE [LARGE SCALE GENOMIC DNA]</scope>
    <source>
        <strain>Berkeley</strain>
    </source>
</reference>
<reference key="4">
    <citation type="journal article" date="2002" name="Genome Biol.">
        <title>Annotation of the Drosophila melanogaster euchromatic genome: a systematic review.</title>
        <authorList>
            <person name="Misra S."/>
            <person name="Crosby M.A."/>
            <person name="Mungall C.J."/>
            <person name="Matthews B.B."/>
            <person name="Campbell K.S."/>
            <person name="Hradecky P."/>
            <person name="Huang Y."/>
            <person name="Kaminker J.S."/>
            <person name="Millburn G.H."/>
            <person name="Prochnik S.E."/>
            <person name="Smith C.D."/>
            <person name="Tupy J.L."/>
            <person name="Whitfield E.J."/>
            <person name="Bayraktaroglu L."/>
            <person name="Berman B.P."/>
            <person name="Bettencourt B.R."/>
            <person name="Celniker S.E."/>
            <person name="de Grey A.D.N.J."/>
            <person name="Drysdale R.A."/>
            <person name="Harris N.L."/>
            <person name="Richter J."/>
            <person name="Russo S."/>
            <person name="Schroeder A.J."/>
            <person name="Shu S.Q."/>
            <person name="Stapleton M."/>
            <person name="Yamada C."/>
            <person name="Ashburner M."/>
            <person name="Gelbart W.M."/>
            <person name="Rubin G.M."/>
            <person name="Lewis S.E."/>
        </authorList>
    </citation>
    <scope>GENOME REANNOTATION</scope>
    <source>
        <strain>Berkeley</strain>
    </source>
</reference>
<reference key="5">
    <citation type="journal article" date="2002" name="Genome Biol.">
        <title>A Drosophila full-length cDNA resource.</title>
        <authorList>
            <person name="Stapleton M."/>
            <person name="Carlson J.W."/>
            <person name="Brokstein P."/>
            <person name="Yu C."/>
            <person name="Champe M."/>
            <person name="George R.A."/>
            <person name="Guarin H."/>
            <person name="Kronmiller B."/>
            <person name="Pacleb J.M."/>
            <person name="Park S."/>
            <person name="Wan K.H."/>
            <person name="Rubin G.M."/>
            <person name="Celniker S.E."/>
        </authorList>
    </citation>
    <scope>NUCLEOTIDE SEQUENCE [LARGE SCALE MRNA]</scope>
    <source>
        <strain>Berkeley</strain>
        <tissue>Head</tissue>
    </source>
</reference>
<reference key="6">
    <citation type="journal article" date="2001" name="Mol. Biol. Cell">
        <title>Drosophila heterochromatin protein 1 (HP1)/origin recognition complex (ORC) protein is associated with HP1 and ORC and functions in heterochromatin-induced silencing.</title>
        <authorList>
            <person name="Shareef M.M."/>
            <person name="King C."/>
            <person name="Damaj M."/>
            <person name="Badagu R."/>
            <person name="Huang D.W."/>
            <person name="Kellum R."/>
        </authorList>
    </citation>
    <scope>SUBCELLULAR LOCATION</scope>
</reference>
<reference key="7">
    <citation type="journal article" date="2003" name="Mol. Biol. Cell">
        <title>Drosophila MCM10 interacts with members of the prereplication complex and is required for proper chromosome condensation.</title>
        <authorList>
            <person name="Christensen T.W."/>
            <person name="Tye B.K."/>
        </authorList>
    </citation>
    <scope>INTERACTION WITH MCM10</scope>
</reference>
<reference key="8">
    <citation type="journal article" date="2008" name="J. Proteome Res.">
        <title>Phosphoproteome analysis of Drosophila melanogaster embryos.</title>
        <authorList>
            <person name="Zhai B."/>
            <person name="Villen J."/>
            <person name="Beausoleil S.A."/>
            <person name="Mintseris J."/>
            <person name="Gygi S.P."/>
        </authorList>
    </citation>
    <scope>PHOSPHORYLATION [LARGE SCALE ANALYSIS] AT THR-24; SER-26; SER-30; SER-87; SER-91; SER-92; THR-151; THR-154; THR-157; THR-160; THR-167; THR-170; THR-181; THR-258 AND SER-260</scope>
    <scope>IDENTIFICATION BY MASS SPECTROMETRY</scope>
    <source>
        <tissue>Embryo</tissue>
    </source>
</reference>
<reference key="9">
    <citation type="journal article" date="2016" name="Nucleic Acids Res.">
        <title>ORC interacts with THSC/TREX-2 and its subunits promote Nxf1 association with mRNP and mRNA export in Drosophila.</title>
        <authorList>
            <person name="Kopytova D."/>
            <person name="Popova V."/>
            <person name="Kurshakova M."/>
            <person name="Shidlovskii Y."/>
            <person name="Nabirochkina E."/>
            <person name="Brechalov A."/>
            <person name="Georgiev G."/>
            <person name="Georgieva S."/>
        </authorList>
    </citation>
    <scope>FUNCTION</scope>
    <scope>SUBUNIT</scope>
    <scope>DEVELOPMENTAL STAGE</scope>
</reference>
<reference key="10">
    <citation type="journal article" date="2018" name="Acta Naturae">
        <title>Zinc Finger Protein CG9890 - New Component of ENY2-Containing Complexes of Drosophila.</title>
        <authorList>
            <person name="Fursova N.A."/>
            <person name="Nikolenko J.V."/>
            <person name="Soshnikova N.V."/>
            <person name="Mazina M.Y."/>
            <person name="Vorobyova N.E."/>
            <person name="Krasnov A.N."/>
        </authorList>
    </citation>
    <scope>INTERACTION WITH CG9890</scope>
</reference>
<name>ORC2_DROME</name>
<evidence type="ECO:0000256" key="1">
    <source>
        <dbReference type="SAM" id="MobiDB-lite"/>
    </source>
</evidence>
<evidence type="ECO:0000269" key="2">
    <source>
    </source>
</evidence>
<evidence type="ECO:0000269" key="3">
    <source>
    </source>
</evidence>
<evidence type="ECO:0000269" key="4">
    <source>
    </source>
</evidence>
<evidence type="ECO:0000269" key="5">
    <source>
    </source>
</evidence>
<evidence type="ECO:0000269" key="6">
    <source>
    </source>
</evidence>
<evidence type="ECO:0000269" key="7">
    <source>
    </source>
</evidence>
<evidence type="ECO:0000305" key="8"/>
<evidence type="ECO:0000305" key="9">
    <source>
    </source>
</evidence>
<evidence type="ECO:0007829" key="10">
    <source>
        <dbReference type="PDB" id="7JGS"/>
    </source>
</evidence>
<evidence type="ECO:0007829" key="11">
    <source>
        <dbReference type="PDB" id="7JK4"/>
    </source>
</evidence>
<proteinExistence type="evidence at protein level"/>